<evidence type="ECO:0000255" key="1">
    <source>
        <dbReference type="PROSITE-ProRule" id="PRU00539"/>
    </source>
</evidence>
<evidence type="ECO:0000305" key="2"/>
<evidence type="ECO:0007829" key="3">
    <source>
        <dbReference type="PDB" id="1MUK"/>
    </source>
</evidence>
<evidence type="ECO:0007829" key="4">
    <source>
        <dbReference type="PDB" id="1N1H"/>
    </source>
</evidence>
<evidence type="ECO:0007829" key="5">
    <source>
        <dbReference type="PDB" id="1N38"/>
    </source>
</evidence>
<keyword id="KW-0002">3D-structure</keyword>
<keyword id="KW-0167">Capsid protein</keyword>
<keyword id="KW-0378">Hydrolase</keyword>
<keyword id="KW-0547">Nucleotide-binding</keyword>
<keyword id="KW-0548">Nucleotidyltransferase</keyword>
<keyword id="KW-0696">RNA-directed RNA polymerase</keyword>
<keyword id="KW-0808">Transferase</keyword>
<keyword id="KW-0693">Viral RNA replication</keyword>
<keyword id="KW-0946">Virion</keyword>
<protein>
    <recommendedName>
        <fullName>RNA-directed RNA polymerase lambda-3</fullName>
        <shortName>Lambda3</shortName>
        <ecNumber>2.7.7.48</ecNumber>
    </recommendedName>
    <alternativeName>
        <fullName>Lambda3(Pol)</fullName>
    </alternativeName>
</protein>
<proteinExistence type="evidence at protein level"/>
<feature type="chain" id="PRO_0000222743" description="RNA-directed RNA polymerase lambda-3">
    <location>
        <begin position="1"/>
        <end position="1267"/>
    </location>
</feature>
<feature type="domain" description="RdRp catalytic" evidence="1">
    <location>
        <begin position="555"/>
        <end position="792"/>
    </location>
</feature>
<feature type="sequence conflict" description="In Ref. 2; ABP48913." evidence="2" ref="2">
    <original>S</original>
    <variation>A</variation>
    <location>
        <position position="267"/>
    </location>
</feature>
<feature type="sequence conflict" description="In Ref. 1; AAA47255." evidence="2" ref="1">
    <original>ALRE</original>
    <variation>DSAN</variation>
    <location>
        <begin position="465"/>
        <end position="468"/>
    </location>
</feature>
<feature type="sequence conflict" description="In Ref. 2; ABP48913." evidence="2" ref="2">
    <original>P</original>
    <variation>T</variation>
    <location>
        <position position="557"/>
    </location>
</feature>
<feature type="sequence conflict" description="In Ref. 2; ABP48913." evidence="2" ref="2">
    <original>ND</original>
    <variation>KM</variation>
    <location>
        <begin position="755"/>
        <end position="756"/>
    </location>
</feature>
<feature type="sequence conflict" description="In Ref. 2; ABP48913." evidence="2" ref="2">
    <original>T</original>
    <variation>P</variation>
    <location>
        <position position="926"/>
    </location>
</feature>
<feature type="sequence conflict" description="In Ref. 2; ABP48913." evidence="2" ref="2">
    <original>S</original>
    <variation>P</variation>
    <location>
        <position position="963"/>
    </location>
</feature>
<feature type="sequence conflict" description="In Ref. 2; ABP48913." evidence="2" ref="2">
    <original>S</original>
    <variation>N</variation>
    <location>
        <position position="1048"/>
    </location>
</feature>
<feature type="helix" evidence="3">
    <location>
        <begin position="4"/>
        <end position="15"/>
    </location>
</feature>
<feature type="turn" evidence="3">
    <location>
        <begin position="16"/>
        <end position="18"/>
    </location>
</feature>
<feature type="helix" evidence="3">
    <location>
        <begin position="24"/>
        <end position="36"/>
    </location>
</feature>
<feature type="helix" evidence="3">
    <location>
        <begin position="39"/>
        <end position="47"/>
    </location>
</feature>
<feature type="helix" evidence="3">
    <location>
        <begin position="53"/>
        <end position="55"/>
    </location>
</feature>
<feature type="helix" evidence="3">
    <location>
        <begin position="61"/>
        <end position="63"/>
    </location>
</feature>
<feature type="helix" evidence="3">
    <location>
        <begin position="69"/>
        <end position="72"/>
    </location>
</feature>
<feature type="strand" evidence="3">
    <location>
        <begin position="73"/>
        <end position="75"/>
    </location>
</feature>
<feature type="strand" evidence="3">
    <location>
        <begin position="81"/>
        <end position="83"/>
    </location>
</feature>
<feature type="turn" evidence="5">
    <location>
        <begin position="89"/>
        <end position="92"/>
    </location>
</feature>
<feature type="helix" evidence="3">
    <location>
        <begin position="100"/>
        <end position="102"/>
    </location>
</feature>
<feature type="strand" evidence="3">
    <location>
        <begin position="103"/>
        <end position="105"/>
    </location>
</feature>
<feature type="strand" evidence="3">
    <location>
        <begin position="112"/>
        <end position="115"/>
    </location>
</feature>
<feature type="helix" evidence="3">
    <location>
        <begin position="117"/>
        <end position="124"/>
    </location>
</feature>
<feature type="helix" evidence="3">
    <location>
        <begin position="128"/>
        <end position="144"/>
    </location>
</feature>
<feature type="strand" evidence="3">
    <location>
        <begin position="147"/>
        <end position="149"/>
    </location>
</feature>
<feature type="helix" evidence="3">
    <location>
        <begin position="151"/>
        <end position="162"/>
    </location>
</feature>
<feature type="turn" evidence="3">
    <location>
        <begin position="170"/>
        <end position="173"/>
    </location>
</feature>
<feature type="helix" evidence="3">
    <location>
        <begin position="181"/>
        <end position="183"/>
    </location>
</feature>
<feature type="helix" evidence="3">
    <location>
        <begin position="185"/>
        <end position="198"/>
    </location>
</feature>
<feature type="strand" evidence="3">
    <location>
        <begin position="206"/>
        <end position="209"/>
    </location>
</feature>
<feature type="strand" evidence="3">
    <location>
        <begin position="214"/>
        <end position="217"/>
    </location>
</feature>
<feature type="helix" evidence="3">
    <location>
        <begin position="226"/>
        <end position="242"/>
    </location>
</feature>
<feature type="helix" evidence="3">
    <location>
        <begin position="247"/>
        <end position="262"/>
    </location>
</feature>
<feature type="helix" evidence="3">
    <location>
        <begin position="266"/>
        <end position="273"/>
    </location>
</feature>
<feature type="helix" evidence="3">
    <location>
        <begin position="276"/>
        <end position="279"/>
    </location>
</feature>
<feature type="helix" evidence="3">
    <location>
        <begin position="282"/>
        <end position="284"/>
    </location>
</feature>
<feature type="strand" evidence="3">
    <location>
        <begin position="291"/>
        <end position="299"/>
    </location>
</feature>
<feature type="helix" evidence="3">
    <location>
        <begin position="303"/>
        <end position="305"/>
    </location>
</feature>
<feature type="strand" evidence="3">
    <location>
        <begin position="307"/>
        <end position="315"/>
    </location>
</feature>
<feature type="helix" evidence="3">
    <location>
        <begin position="318"/>
        <end position="320"/>
    </location>
</feature>
<feature type="helix" evidence="3">
    <location>
        <begin position="328"/>
        <end position="337"/>
    </location>
</feature>
<feature type="helix" evidence="3">
    <location>
        <begin position="341"/>
        <end position="352"/>
    </location>
</feature>
<feature type="strand" evidence="3">
    <location>
        <begin position="356"/>
        <end position="358"/>
    </location>
</feature>
<feature type="helix" evidence="3">
    <location>
        <begin position="359"/>
        <end position="369"/>
    </location>
</feature>
<feature type="helix" evidence="3">
    <location>
        <begin position="381"/>
        <end position="388"/>
    </location>
</feature>
<feature type="helix" evidence="3">
    <location>
        <begin position="401"/>
        <end position="403"/>
    </location>
</feature>
<feature type="strand" evidence="3">
    <location>
        <begin position="404"/>
        <end position="408"/>
    </location>
</feature>
<feature type="strand" evidence="3">
    <location>
        <begin position="411"/>
        <end position="414"/>
    </location>
</feature>
<feature type="helix" evidence="3">
    <location>
        <begin position="422"/>
        <end position="438"/>
    </location>
</feature>
<feature type="helix" evidence="3">
    <location>
        <begin position="440"/>
        <end position="443"/>
    </location>
</feature>
<feature type="helix" evidence="3">
    <location>
        <begin position="445"/>
        <end position="453"/>
    </location>
</feature>
<feature type="strand" evidence="3">
    <location>
        <begin position="457"/>
        <end position="459"/>
    </location>
</feature>
<feature type="helix" evidence="3">
    <location>
        <begin position="463"/>
        <end position="471"/>
    </location>
</feature>
<feature type="turn" evidence="3">
    <location>
        <begin position="472"/>
        <end position="474"/>
    </location>
</feature>
<feature type="strand" evidence="3">
    <location>
        <begin position="487"/>
        <end position="489"/>
    </location>
</feature>
<feature type="helix" evidence="3">
    <location>
        <begin position="490"/>
        <end position="497"/>
    </location>
</feature>
<feature type="helix" evidence="3">
    <location>
        <begin position="502"/>
        <end position="505"/>
    </location>
</feature>
<feature type="helix" evidence="3">
    <location>
        <begin position="506"/>
        <end position="510"/>
    </location>
</feature>
<feature type="strand" evidence="3">
    <location>
        <begin position="516"/>
        <end position="521"/>
    </location>
</feature>
<feature type="strand" evidence="3">
    <location>
        <begin position="523"/>
        <end position="528"/>
    </location>
</feature>
<feature type="helix" evidence="3">
    <location>
        <begin position="533"/>
        <end position="552"/>
    </location>
</feature>
<feature type="helix" evidence="3">
    <location>
        <begin position="563"/>
        <end position="565"/>
    </location>
</feature>
<feature type="helix" evidence="3">
    <location>
        <begin position="568"/>
        <end position="575"/>
    </location>
</feature>
<feature type="strand" evidence="3">
    <location>
        <begin position="580"/>
        <end position="587"/>
    </location>
</feature>
<feature type="helix" evidence="3">
    <location>
        <begin position="589"/>
        <end position="592"/>
    </location>
</feature>
<feature type="turn" evidence="3">
    <location>
        <begin position="595"/>
        <end position="597"/>
    </location>
</feature>
<feature type="helix" evidence="3">
    <location>
        <begin position="598"/>
        <end position="609"/>
    </location>
</feature>
<feature type="helix" evidence="3">
    <location>
        <begin position="611"/>
        <end position="614"/>
    </location>
</feature>
<feature type="strand" evidence="3">
    <location>
        <begin position="625"/>
        <end position="629"/>
    </location>
</feature>
<feature type="strand" evidence="3">
    <location>
        <begin position="632"/>
        <end position="634"/>
    </location>
</feature>
<feature type="strand" evidence="3">
    <location>
        <begin position="637"/>
        <end position="641"/>
    </location>
</feature>
<feature type="helix" evidence="3">
    <location>
        <begin position="643"/>
        <end position="657"/>
    </location>
</feature>
<feature type="strand" evidence="3">
    <location>
        <begin position="659"/>
        <end position="664"/>
    </location>
</feature>
<feature type="strand" evidence="3">
    <location>
        <begin position="666"/>
        <end position="668"/>
    </location>
</feature>
<feature type="strand" evidence="3">
    <location>
        <begin position="672"/>
        <end position="677"/>
    </location>
</feature>
<feature type="strand" evidence="3">
    <location>
        <begin position="682"/>
        <end position="686"/>
    </location>
</feature>
<feature type="helix" evidence="3">
    <location>
        <begin position="687"/>
        <end position="704"/>
    </location>
</feature>
<feature type="helix" evidence="3">
    <location>
        <begin position="706"/>
        <end position="709"/>
    </location>
</feature>
<feature type="helix" evidence="3">
    <location>
        <begin position="714"/>
        <end position="721"/>
    </location>
</feature>
<feature type="turn" evidence="3">
    <location>
        <begin position="725"/>
        <end position="727"/>
    </location>
</feature>
<feature type="strand" evidence="3">
    <location>
        <begin position="728"/>
        <end position="732"/>
    </location>
</feature>
<feature type="strand" evidence="3">
    <location>
        <begin position="735"/>
        <end position="740"/>
    </location>
</feature>
<feature type="helix" evidence="3">
    <location>
        <begin position="750"/>
        <end position="765"/>
    </location>
</feature>
<feature type="turn" evidence="3">
    <location>
        <begin position="766"/>
        <end position="768"/>
    </location>
</feature>
<feature type="strand" evidence="3">
    <location>
        <begin position="770"/>
        <end position="774"/>
    </location>
</feature>
<feature type="strand" evidence="3">
    <location>
        <begin position="779"/>
        <end position="781"/>
    </location>
</feature>
<feature type="strand" evidence="3">
    <location>
        <begin position="784"/>
        <end position="787"/>
    </location>
</feature>
<feature type="strand" evidence="3">
    <location>
        <begin position="790"/>
        <end position="792"/>
    </location>
</feature>
<feature type="helix" evidence="3">
    <location>
        <begin position="795"/>
        <end position="797"/>
    </location>
</feature>
<feature type="strand" evidence="3">
    <location>
        <begin position="800"/>
        <end position="802"/>
    </location>
</feature>
<feature type="strand" evidence="3">
    <location>
        <begin position="807"/>
        <end position="809"/>
    </location>
</feature>
<feature type="helix" evidence="3">
    <location>
        <begin position="816"/>
        <end position="830"/>
    </location>
</feature>
<feature type="helix" evidence="3">
    <location>
        <begin position="835"/>
        <end position="849"/>
    </location>
</feature>
<feature type="strand" evidence="3">
    <location>
        <begin position="850"/>
        <end position="856"/>
    </location>
</feature>
<feature type="strand" evidence="3">
    <location>
        <begin position="859"/>
        <end position="864"/>
    </location>
</feature>
<feature type="helix" evidence="3">
    <location>
        <begin position="867"/>
        <end position="872"/>
    </location>
</feature>
<feature type="helix" evidence="3">
    <location>
        <begin position="895"/>
        <end position="916"/>
    </location>
</feature>
<feature type="strand" evidence="3">
    <location>
        <begin position="920"/>
        <end position="925"/>
    </location>
</feature>
<feature type="turn" evidence="3">
    <location>
        <begin position="926"/>
        <end position="928"/>
    </location>
</feature>
<feature type="strand" evidence="3">
    <location>
        <begin position="929"/>
        <end position="931"/>
    </location>
</feature>
<feature type="helix" evidence="3">
    <location>
        <begin position="933"/>
        <end position="939"/>
    </location>
</feature>
<feature type="helix" evidence="3">
    <location>
        <begin position="942"/>
        <end position="949"/>
    </location>
</feature>
<feature type="helix" evidence="3">
    <location>
        <begin position="966"/>
        <end position="978"/>
    </location>
</feature>
<feature type="helix" evidence="3">
    <location>
        <begin position="982"/>
        <end position="998"/>
    </location>
</feature>
<feature type="helix" evidence="3">
    <location>
        <begin position="1009"/>
        <end position="1011"/>
    </location>
</feature>
<feature type="helix" evidence="3">
    <location>
        <begin position="1012"/>
        <end position="1022"/>
    </location>
</feature>
<feature type="helix" evidence="3">
    <location>
        <begin position="1028"/>
        <end position="1043"/>
    </location>
</feature>
<feature type="helix" evidence="3">
    <location>
        <begin position="1051"/>
        <end position="1056"/>
    </location>
</feature>
<feature type="strand" evidence="3">
    <location>
        <begin position="1059"/>
        <end position="1066"/>
    </location>
</feature>
<feature type="helix" evidence="3">
    <location>
        <begin position="1086"/>
        <end position="1095"/>
    </location>
</feature>
<feature type="helix" evidence="3">
    <location>
        <begin position="1102"/>
        <end position="1106"/>
    </location>
</feature>
<feature type="helix" evidence="3">
    <location>
        <begin position="1107"/>
        <end position="1109"/>
    </location>
</feature>
<feature type="helix" evidence="3">
    <location>
        <begin position="1121"/>
        <end position="1133"/>
    </location>
</feature>
<feature type="helix" evidence="3">
    <location>
        <begin position="1138"/>
        <end position="1146"/>
    </location>
</feature>
<feature type="turn" evidence="3">
    <location>
        <begin position="1147"/>
        <end position="1149"/>
    </location>
</feature>
<feature type="helix" evidence="3">
    <location>
        <begin position="1152"/>
        <end position="1164"/>
    </location>
</feature>
<feature type="helix" evidence="3">
    <location>
        <begin position="1169"/>
        <end position="1173"/>
    </location>
</feature>
<feature type="helix" evidence="3">
    <location>
        <begin position="1174"/>
        <end position="1176"/>
    </location>
</feature>
<feature type="helix" evidence="3">
    <location>
        <begin position="1182"/>
        <end position="1184"/>
    </location>
</feature>
<feature type="helix" evidence="3">
    <location>
        <begin position="1189"/>
        <end position="1195"/>
    </location>
</feature>
<feature type="strand" evidence="3">
    <location>
        <begin position="1196"/>
        <end position="1198"/>
    </location>
</feature>
<feature type="turn" evidence="3">
    <location>
        <begin position="1207"/>
        <end position="1209"/>
    </location>
</feature>
<feature type="helix" evidence="4">
    <location>
        <begin position="1213"/>
        <end position="1217"/>
    </location>
</feature>
<feature type="helix" evidence="3">
    <location>
        <begin position="1218"/>
        <end position="1232"/>
    </location>
</feature>
<feature type="strand" evidence="3">
    <location>
        <begin position="1233"/>
        <end position="1236"/>
    </location>
</feature>
<feature type="strand" evidence="3">
    <location>
        <begin position="1238"/>
        <end position="1245"/>
    </location>
</feature>
<feature type="helix" evidence="3">
    <location>
        <begin position="1248"/>
        <end position="1262"/>
    </location>
</feature>
<organism>
    <name type="scientific">Reovirus type 3 (strain Dearing)</name>
    <name type="common">T3D</name>
    <name type="synonym">Mammalian orthoreovirus 3</name>
    <dbReference type="NCBI Taxonomy" id="10886"/>
    <lineage>
        <taxon>Viruses</taxon>
        <taxon>Riboviria</taxon>
        <taxon>Orthornavirae</taxon>
        <taxon>Duplornaviricota</taxon>
        <taxon>Resentoviricetes</taxon>
        <taxon>Reovirales</taxon>
        <taxon>Spinareoviridae</taxon>
        <taxon>Orthoreovirus</taxon>
        <taxon>Mammalian orthoreovirus</taxon>
    </lineage>
</organism>
<reference key="1">
    <citation type="journal article" date="1989" name="Virology">
        <title>The sequences of the reovirus serotype 1, 2, and 3 L1 genome segments and analysis of the mode of divergence of the reovirus serotypes.</title>
        <authorList>
            <person name="Wiener J.R."/>
            <person name="Joklik W.K."/>
        </authorList>
    </citation>
    <scope>NUCLEOTIDE SEQUENCE [GENOMIC RNA]</scope>
</reference>
<reference key="2">
    <citation type="journal article" date="2007" name="Cell Host Microbe">
        <title>A plasmid-based reverse genetics system for animal double-stranded RNA viruses.</title>
        <authorList>
            <person name="Kobayashi T."/>
            <person name="Antar A.A."/>
            <person name="Boehme K.W."/>
            <person name="Danthi P."/>
            <person name="Eby E.A."/>
            <person name="Guglielmi K.M."/>
            <person name="Holm G.H."/>
            <person name="Johnson E.M."/>
            <person name="Maginnis M.S."/>
            <person name="Naik S."/>
            <person name="Skelton W.B."/>
            <person name="Wetzel J.D."/>
            <person name="Wilson G.J."/>
            <person name="Chappell J.D."/>
            <person name="Dermody T.S."/>
        </authorList>
    </citation>
    <scope>NUCLEOTIDE SEQUENCE [GENOMIC RNA]</scope>
    <source>
        <strain>Infectious clone</strain>
    </source>
</reference>
<reference key="3">
    <citation type="journal article" date="2002" name="Cell">
        <title>RNA synthesis in a cage -- structural studies of reovirus polymerase lambda3.</title>
        <authorList>
            <person name="Tao Y."/>
            <person name="Farsetta D.L."/>
            <person name="Nibert M.L."/>
            <person name="Harrison S.C."/>
        </authorList>
    </citation>
    <scope>X-RAY CRYSTALLOGRAPHY (2.5 ANGSTROMS)</scope>
</reference>
<name>RDRP_REOVD</name>
<sequence>MSSMILTQFGPFIESISGITDQSNDVFEDAAKAFSMFTRSDVYKALDEIPFSDDAMLPIPPTIYTKPSHDSYYYIDALNRVRRKTYQGPDDVYVPNCSIVELLEPHETLTSYGRLSEAIENRAKDGDSQARIATTYGRIAESQARQIKAPLEKFVLALLVAEAGGSLYDPVLQKYDEIPDLSHNCPLWCFREICRHISGPLPDRAPYLYLSAGVFWLMSPRMTSAIPPLLSDLVNLAILQQTAGLDPSLVKLGVQICLHAAASSSYSWFILKTKSIFPQNTLHSMYESLEGGYCPNLEWLEPRSDYKFMYMGVMPLSAKYARSAPSNDKKARELGEKYGLSSVVGELRKRTKTYVKHDFASVRYIRDAMACTSGIFLVRTPTETVLQEYTQSPEIKVPIPQKDWTGPIGEIRILKDTTSSIARYLYRTWYLAAARMAAQPRTWDPLFQAIMRSQYVTARGGSGAALRESLYAINVSLPDFKGLPVKAATKIFQAAQLANLPFSHTSVAILADTSMGLRNQVQRRPRSIMPLNVPQQQVSAPHTLTADYINYHMNLSPTSGSAVIEKVIPLGVYASSPPNQSINIDISACDASITWDFFLSVIMAAIHEGVASSSIGKPFMGVPASIVNDESVVGVRAARPISGMQNMIQHLSKLYKRGFSYRVNDSFSPGNDFTHMTTTFPSGSTATSTEHTANNSTMMETFLTVWGPEHTDDPDVLRLMKSLTIQRNYVCQGDDGLMIIDGTTAGKVNSETIQNDLELISKYGEEFGWKYDIAYDGTAEYLKLYFIFGCRIPNLSRHPIVGKERANSSAEEPWPAILDQIMGVFFNGVHDGLQWQRWIRYSWALCCAFSRQRTMIGESVGYLQYPMWSFVYWGLPLVKAFGSDPWIFSWYMPTGDLGMYSWISLIRPLMTRWMVANGYVTDRCSTVFGNADYRRCFNELKLYQGYYMAQLPRNPKKSGRAASREVREQFTQALSDYLMQNPELKSRVLRGRSEWEKYGAGIIHNPPSLFDVPHKWYQGAQEAAIATREELAEMDETLMRARRHSYSSFSKLLEAYLLVKWRMCEAREPSVDLRLPLCAGIDPLNSDPFLKMVSVGPMLQSTRKYFAQTLFMAKTVSGLDVNAIDSALLRLRTLGADKKALTAQLLMVGLQESEADALAGKIMLQDVNTVQLARVVNLAVPDTWMSLDFDSMFKHHVKLLPKDGRHLNTDIPPRMGWLRAILRFLGAGMVMTATGVAVDIYLEDIHGGGRSLGQRFMTWMRQEGRSA</sequence>
<dbReference type="EC" id="2.7.7.48"/>
<dbReference type="EMBL" id="M31058">
    <property type="protein sequence ID" value="AAA47255.1"/>
    <property type="molecule type" value="Genomic_RNA"/>
</dbReference>
<dbReference type="EMBL" id="EF494435">
    <property type="protein sequence ID" value="ABP48913.1"/>
    <property type="molecule type" value="Genomic_RNA"/>
</dbReference>
<dbReference type="PIR" id="C30121">
    <property type="entry name" value="MWXR33"/>
</dbReference>
<dbReference type="PDB" id="1MUK">
    <property type="method" value="X-ray"/>
    <property type="resolution" value="2.50 A"/>
    <property type="chains" value="A=1-1267"/>
</dbReference>
<dbReference type="PDB" id="1MWH">
    <property type="method" value="X-ray"/>
    <property type="resolution" value="2.50 A"/>
    <property type="chains" value="A=1-1267"/>
</dbReference>
<dbReference type="PDB" id="1N1H">
    <property type="method" value="X-ray"/>
    <property type="resolution" value="2.80 A"/>
    <property type="chains" value="A=1-1267"/>
</dbReference>
<dbReference type="PDB" id="1N35">
    <property type="method" value="X-ray"/>
    <property type="resolution" value="2.50 A"/>
    <property type="chains" value="A=1-1267"/>
</dbReference>
<dbReference type="PDB" id="1N38">
    <property type="method" value="X-ray"/>
    <property type="resolution" value="2.80 A"/>
    <property type="chains" value="A=1-1267"/>
</dbReference>
<dbReference type="PDB" id="1UON">
    <property type="method" value="EM"/>
    <property type="resolution" value="7.60 A"/>
    <property type="chains" value="A=1-1267"/>
</dbReference>
<dbReference type="PDBsum" id="1MUK"/>
<dbReference type="PDBsum" id="1MWH"/>
<dbReference type="PDBsum" id="1N1H"/>
<dbReference type="PDBsum" id="1N35"/>
<dbReference type="PDBsum" id="1N38"/>
<dbReference type="PDBsum" id="1UON"/>
<dbReference type="SMR" id="P0CK31"/>
<dbReference type="DrugBank" id="DB03958">
    <property type="generic name" value="7-methyl-guanosine-5'-triphosphate-5'-guanosine"/>
</dbReference>
<dbReference type="EvolutionaryTrace" id="P0CK31"/>
<dbReference type="Proteomes" id="UP000006373">
    <property type="component" value="Genome"/>
</dbReference>
<dbReference type="Proteomes" id="UP000165799">
    <property type="component" value="Genome"/>
</dbReference>
<dbReference type="GO" id="GO:0019013">
    <property type="term" value="C:viral nucleocapsid"/>
    <property type="evidence" value="ECO:0007669"/>
    <property type="project" value="InterPro"/>
</dbReference>
<dbReference type="GO" id="GO:0016787">
    <property type="term" value="F:hydrolase activity"/>
    <property type="evidence" value="ECO:0007669"/>
    <property type="project" value="UniProtKB-KW"/>
</dbReference>
<dbReference type="GO" id="GO:0000166">
    <property type="term" value="F:nucleotide binding"/>
    <property type="evidence" value="ECO:0007669"/>
    <property type="project" value="UniProtKB-KW"/>
</dbReference>
<dbReference type="GO" id="GO:0003723">
    <property type="term" value="F:RNA binding"/>
    <property type="evidence" value="ECO:0007669"/>
    <property type="project" value="InterPro"/>
</dbReference>
<dbReference type="GO" id="GO:0003968">
    <property type="term" value="F:RNA-directed RNA polymerase activity"/>
    <property type="evidence" value="ECO:0007669"/>
    <property type="project" value="UniProtKB-KW"/>
</dbReference>
<dbReference type="GO" id="GO:0019079">
    <property type="term" value="P:viral genome replication"/>
    <property type="evidence" value="ECO:0007669"/>
    <property type="project" value="InterPro"/>
</dbReference>
<dbReference type="Gene3D" id="3.90.1850.10">
    <property type="entry name" value="RNA-directed RNA polymerase lambda-3"/>
    <property type="match status" value="1"/>
</dbReference>
<dbReference type="InterPro" id="IPR043502">
    <property type="entry name" value="DNA/RNA_pol_sf"/>
</dbReference>
<dbReference type="InterPro" id="IPR012915">
    <property type="entry name" value="RdRP_5"/>
</dbReference>
<dbReference type="InterPro" id="IPR007097">
    <property type="entry name" value="RNA-dir_pol_reovirus"/>
</dbReference>
<dbReference type="Pfam" id="PF07925">
    <property type="entry name" value="RdRP_5"/>
    <property type="match status" value="1"/>
</dbReference>
<dbReference type="SUPFAM" id="SSF56672">
    <property type="entry name" value="DNA/RNA polymerases"/>
    <property type="match status" value="1"/>
</dbReference>
<dbReference type="PROSITE" id="PS50523">
    <property type="entry name" value="RDRP_DSRNA_REO"/>
    <property type="match status" value="1"/>
</dbReference>
<gene>
    <name type="primary">L1</name>
</gene>
<accession>P0CK31</accession>
<accession>A4ZY20</accession>
<accession>P17376</accession>
<accession>P17378</accession>
<accession>Q85665</accession>
<comment type="function">
    <text>RNA-directed RNA polymerase that is involved in transcription and genome replication. Following infection, it catalyzes the synthesis of fully conservative plus strands. After core assembly, which consists in recruitment of one capped plus-strand for each genomic segments and polymerase complexes, the polymerase switches mode and catalyzes the synthesis of complementary minus-strands.</text>
</comment>
<comment type="catalytic activity">
    <reaction evidence="1">
        <text>RNA(n) + a ribonucleoside 5'-triphosphate = RNA(n+1) + diphosphate</text>
        <dbReference type="Rhea" id="RHEA:21248"/>
        <dbReference type="Rhea" id="RHEA-COMP:14527"/>
        <dbReference type="Rhea" id="RHEA-COMP:17342"/>
        <dbReference type="ChEBI" id="CHEBI:33019"/>
        <dbReference type="ChEBI" id="CHEBI:61557"/>
        <dbReference type="ChEBI" id="CHEBI:140395"/>
        <dbReference type="EC" id="2.7.7.48"/>
    </reaction>
</comment>
<comment type="subcellular location">
    <subcellularLocation>
        <location evidence="2">Virion</location>
    </subcellularLocation>
    <text>Found in the inner capsid (12 copies).</text>
</comment>
<comment type="similarity">
    <text evidence="2">Belongs to the reoviridae RNA-directed RNA polymerase family.</text>
</comment>
<organismHost>
    <name type="scientific">Mammalia</name>
    <dbReference type="NCBI Taxonomy" id="40674"/>
</organismHost>